<geneLocation type="chloroplast"/>
<evidence type="ECO:0000255" key="1">
    <source>
        <dbReference type="HAMAP-Rule" id="MF_01316"/>
    </source>
</evidence>
<feature type="chain" id="PRO_0000298318" description="Photosystem II reaction center protein I">
    <location>
        <begin position="1"/>
        <end position="36"/>
    </location>
</feature>
<feature type="transmembrane region" description="Helical" evidence="1">
    <location>
        <begin position="4"/>
        <end position="24"/>
    </location>
</feature>
<name>PSBI_CRUWA</name>
<keyword id="KW-0150">Chloroplast</keyword>
<keyword id="KW-0472">Membrane</keyword>
<keyword id="KW-0602">Photosynthesis</keyword>
<keyword id="KW-0604">Photosystem II</keyword>
<keyword id="KW-0934">Plastid</keyword>
<keyword id="KW-0674">Reaction center</keyword>
<keyword id="KW-0793">Thylakoid</keyword>
<keyword id="KW-0812">Transmembrane</keyword>
<keyword id="KW-1133">Transmembrane helix</keyword>
<proteinExistence type="inferred from homology"/>
<organism>
    <name type="scientific">Crucihimalaya wallichii</name>
    <name type="common">Rock-cress</name>
    <name type="synonym">Arabidopsis campestris</name>
    <dbReference type="NCBI Taxonomy" id="78192"/>
    <lineage>
        <taxon>Eukaryota</taxon>
        <taxon>Viridiplantae</taxon>
        <taxon>Streptophyta</taxon>
        <taxon>Embryophyta</taxon>
        <taxon>Tracheophyta</taxon>
        <taxon>Spermatophyta</taxon>
        <taxon>Magnoliopsida</taxon>
        <taxon>eudicotyledons</taxon>
        <taxon>Gunneridae</taxon>
        <taxon>Pentapetalae</taxon>
        <taxon>rosids</taxon>
        <taxon>malvids</taxon>
        <taxon>Brassicales</taxon>
        <taxon>Brassicaceae</taxon>
        <taxon>Crucihimalayeae</taxon>
        <taxon>Crucihimalaya</taxon>
    </lineage>
</organism>
<dbReference type="EMBL" id="AP009372">
    <property type="protein sequence ID" value="BAF50270.1"/>
    <property type="molecule type" value="Genomic_DNA"/>
</dbReference>
<dbReference type="RefSeq" id="YP_001123446.1">
    <property type="nucleotide sequence ID" value="NC_009271.1"/>
</dbReference>
<dbReference type="SMR" id="A4QKR5"/>
<dbReference type="GeneID" id="4962648"/>
<dbReference type="GO" id="GO:0009535">
    <property type="term" value="C:chloroplast thylakoid membrane"/>
    <property type="evidence" value="ECO:0007669"/>
    <property type="project" value="UniProtKB-SubCell"/>
</dbReference>
<dbReference type="GO" id="GO:0009539">
    <property type="term" value="C:photosystem II reaction center"/>
    <property type="evidence" value="ECO:0007669"/>
    <property type="project" value="InterPro"/>
</dbReference>
<dbReference type="GO" id="GO:0015979">
    <property type="term" value="P:photosynthesis"/>
    <property type="evidence" value="ECO:0007669"/>
    <property type="project" value="UniProtKB-UniRule"/>
</dbReference>
<dbReference type="HAMAP" id="MF_01316">
    <property type="entry name" value="PSII_PsbI"/>
    <property type="match status" value="1"/>
</dbReference>
<dbReference type="InterPro" id="IPR003686">
    <property type="entry name" value="PSII_PsbI"/>
</dbReference>
<dbReference type="InterPro" id="IPR037271">
    <property type="entry name" value="PSII_PsbI_sf"/>
</dbReference>
<dbReference type="NCBIfam" id="NF002735">
    <property type="entry name" value="PRK02655.1"/>
    <property type="match status" value="1"/>
</dbReference>
<dbReference type="PANTHER" id="PTHR35772">
    <property type="entry name" value="PHOTOSYSTEM II REACTION CENTER PROTEIN I"/>
    <property type="match status" value="1"/>
</dbReference>
<dbReference type="PANTHER" id="PTHR35772:SF1">
    <property type="entry name" value="PHOTOSYSTEM II REACTION CENTER PROTEIN I"/>
    <property type="match status" value="1"/>
</dbReference>
<dbReference type="Pfam" id="PF02532">
    <property type="entry name" value="PsbI"/>
    <property type="match status" value="1"/>
</dbReference>
<dbReference type="SUPFAM" id="SSF161041">
    <property type="entry name" value="Photosystem II reaction center protein I, PsbI"/>
    <property type="match status" value="1"/>
</dbReference>
<accession>A4QKR5</accession>
<sequence length="36" mass="4168">MLTLKLFVYTVVIFFVSLFIFGFLSNDPGRNPGREE</sequence>
<reference key="1">
    <citation type="submission" date="2007-03" db="EMBL/GenBank/DDBJ databases">
        <title>Sequencing analysis of Crucihimalaya wallichii chloroplast DNA.</title>
        <authorList>
            <person name="Hosouchi T."/>
            <person name="Tsuruoka H."/>
            <person name="Kotani H."/>
        </authorList>
    </citation>
    <scope>NUCLEOTIDE SEQUENCE [LARGE SCALE GENOMIC DNA]</scope>
</reference>
<comment type="function">
    <text evidence="1">One of the components of the core complex of photosystem II (PSII), required for its stability and/or assembly. PSII is a light-driven water:plastoquinone oxidoreductase that uses light energy to abstract electrons from H(2)O, generating O(2) and a proton gradient subsequently used for ATP formation. It consists of a core antenna complex that captures photons, and an electron transfer chain that converts photonic excitation into a charge separation.</text>
</comment>
<comment type="subunit">
    <text evidence="1">PSII is composed of 1 copy each of membrane proteins PsbA, PsbB, PsbC, PsbD, PsbE, PsbF, PsbH, PsbI, PsbJ, PsbK, PsbL, PsbM, PsbT, PsbX, PsbY, PsbZ, Psb30/Ycf12, at least 3 peripheral proteins of the oxygen-evolving complex and a large number of cofactors. It forms dimeric complexes.</text>
</comment>
<comment type="subcellular location">
    <subcellularLocation>
        <location evidence="1">Plastid</location>
        <location evidence="1">Chloroplast thylakoid membrane</location>
        <topology evidence="1">Single-pass membrane protein</topology>
    </subcellularLocation>
</comment>
<comment type="similarity">
    <text evidence="1">Belongs to the PsbI family.</text>
</comment>
<gene>
    <name evidence="1" type="primary">psbI</name>
</gene>
<protein>
    <recommendedName>
        <fullName evidence="1">Photosystem II reaction center protein I</fullName>
        <shortName evidence="1">PSII-I</shortName>
    </recommendedName>
    <alternativeName>
        <fullName evidence="1">PSII 4.8 kDa protein</fullName>
    </alternativeName>
</protein>